<feature type="signal peptide" evidence="3">
    <location>
        <begin position="1"/>
        <end position="28"/>
    </location>
</feature>
<feature type="chain" id="PRO_0000304646" description="Voltage-dependent calcium channel subunit alpha-2/delta-3">
    <location>
        <begin position="29"/>
        <end position="1091"/>
    </location>
</feature>
<feature type="chain" id="PRO_0000304647" description="Voltage-dependent calcium channel subunit alpha-2-3" evidence="3">
    <location>
        <begin position="29"/>
        <end status="unknown"/>
    </location>
</feature>
<feature type="chain" id="PRO_0000304648" description="Voltage-dependent calcium channel subunit delta-3" evidence="3">
    <location>
        <begin status="unknown"/>
        <end position="1091"/>
    </location>
</feature>
<feature type="topological domain" description="Extracellular" evidence="3">
    <location>
        <begin position="29"/>
        <end position="1068"/>
    </location>
</feature>
<feature type="transmembrane region" description="Helical" evidence="3">
    <location>
        <begin position="1069"/>
        <end position="1089"/>
    </location>
</feature>
<feature type="topological domain" description="Cytoplasmic" evidence="3">
    <location>
        <begin position="1090"/>
        <end position="1091"/>
    </location>
</feature>
<feature type="domain" description="VWFA" evidence="4">
    <location>
        <begin position="256"/>
        <end position="438"/>
    </location>
</feature>
<feature type="domain" description="Cache">
    <location>
        <begin position="452"/>
        <end position="549"/>
    </location>
</feature>
<feature type="short sequence motif" description="MIDAS-like motif">
    <location>
        <begin position="262"/>
        <end position="266"/>
    </location>
</feature>
<feature type="binding site" evidence="1">
    <location>
        <position position="262"/>
    </location>
    <ligand>
        <name>a divalent metal cation</name>
        <dbReference type="ChEBI" id="CHEBI:60240"/>
    </ligand>
</feature>
<feature type="binding site" evidence="1">
    <location>
        <position position="264"/>
    </location>
    <ligand>
        <name>a divalent metal cation</name>
        <dbReference type="ChEBI" id="CHEBI:60240"/>
    </ligand>
</feature>
<feature type="binding site" evidence="1">
    <location>
        <position position="266"/>
    </location>
    <ligand>
        <name>a divalent metal cation</name>
        <dbReference type="ChEBI" id="CHEBI:60240"/>
    </ligand>
</feature>
<feature type="modified residue" description="Phosphotyrosine" evidence="2">
    <location>
        <position position="924"/>
    </location>
</feature>
<feature type="glycosylation site" description="N-linked (GlcNAc...) asparagine" evidence="3">
    <location>
        <position position="166"/>
    </location>
</feature>
<feature type="glycosylation site" description="N-linked (GlcNAc...) asparagine" evidence="3">
    <location>
        <position position="309"/>
    </location>
</feature>
<feature type="glycosylation site" description="N-linked (GlcNAc...) asparagine" evidence="3">
    <location>
        <position position="553"/>
    </location>
</feature>
<feature type="glycosylation site" description="N-linked (GlcNAc...) asparagine" evidence="3">
    <location>
        <position position="632"/>
    </location>
</feature>
<feature type="glycosylation site" description="N-linked (GlcNAc...) asparagine" evidence="3">
    <location>
        <position position="793"/>
    </location>
</feature>
<feature type="disulfide bond" description="Interchain (between alpha-2-3 and delta-3 chains)" evidence="1">
    <location>
        <begin position="412"/>
        <end position="1055"/>
    </location>
</feature>
<feature type="splice variant" id="VSP_028064" description="In isoform 2 and isoform 3." evidence="6">
    <location>
        <begin position="1"/>
        <end position="94"/>
    </location>
</feature>
<feature type="splice variant" id="VSP_028065" description="In isoform 3." evidence="6">
    <location>
        <begin position="461"/>
        <end position="466"/>
    </location>
</feature>
<feature type="splice variant" id="VSP_028066" description="In isoform 3." evidence="6">
    <original>KRVLVMTNDYYYTDIKGTPFSLGVA</original>
    <variation>FRCGAFQRSWEIFLPRECNHRRRPA</variation>
    <location>
        <begin position="595"/>
        <end position="619"/>
    </location>
</feature>
<feature type="splice variant" id="VSP_028067" description="In isoform 3." evidence="6">
    <location>
        <begin position="620"/>
        <end position="1091"/>
    </location>
</feature>
<organism>
    <name type="scientific">Homo sapiens</name>
    <name type="common">Human</name>
    <dbReference type="NCBI Taxonomy" id="9606"/>
    <lineage>
        <taxon>Eukaryota</taxon>
        <taxon>Metazoa</taxon>
        <taxon>Chordata</taxon>
        <taxon>Craniata</taxon>
        <taxon>Vertebrata</taxon>
        <taxon>Euteleostomi</taxon>
        <taxon>Mammalia</taxon>
        <taxon>Eutheria</taxon>
        <taxon>Euarchontoglires</taxon>
        <taxon>Primates</taxon>
        <taxon>Haplorrhini</taxon>
        <taxon>Catarrhini</taxon>
        <taxon>Hominidae</taxon>
        <taxon>Homo</taxon>
    </lineage>
</organism>
<accession>Q8IZS8</accession>
<accession>B2RPL6</accession>
<accession>Q9NY16</accession>
<accession>Q9NY18</accession>
<proteinExistence type="evidence at protein level"/>
<comment type="function">
    <text evidence="1">The alpha-2/delta subunit of voltage-dependent calcium channels regulates calcium current density and activation/inactivation kinetics of the calcium channel. Acts as a regulatory subunit for P/Q-type calcium channel (CACNA1A), N-type (CACNA1B), L-type (CACNA1C OR CACNA1D) but not T-type (CACNA1G) (By similarity).</text>
</comment>
<comment type="subunit">
    <text evidence="1">Dimer formed of alpha-2-2 and delta-2 chains; disulfide-linked. Voltage-dependent calcium channels are multisubunit complexes, consisting of alpha-1 (CACNA1), alpha-2 (CACNA2D), beta (CACNB) and delta (CACNA2D) subunits in a 1:1:1:1 ratio (By similarity).</text>
</comment>
<comment type="subcellular location">
    <subcellularLocation>
        <location evidence="7">Membrane</location>
        <topology evidence="7">Single-pass type I membrane protein</topology>
    </subcellularLocation>
</comment>
<comment type="alternative products">
    <event type="alternative splicing"/>
    <isoform>
        <id>Q8IZS8-1</id>
        <name>1</name>
        <sequence type="displayed"/>
    </isoform>
    <isoform>
        <id>Q8IZS8-2</id>
        <name>2</name>
        <sequence type="described" ref="VSP_028064"/>
    </isoform>
    <isoform>
        <id>Q8IZS8-3</id>
        <name>3</name>
        <sequence type="described" ref="VSP_028064 VSP_028065 VSP_028066 VSP_028067"/>
    </isoform>
</comment>
<comment type="tissue specificity">
    <text evidence="5">Only detected in brain. Not present in lung, testis, aorta, spleen, jejunum, ventricular muscle and kidney (at protein level). According to PubMed:11687876, it is brain-specific, while according to PubMed:11245980, it is widely expressed.</text>
</comment>
<comment type="domain">
    <text evidence="1">The MIDAS-like motif in the VWFA domain binds divalent metal cations and is required to promote trafficking of the alpha-1 (CACNA1) subunit to the plasma membrane by an integrin-like switch.</text>
</comment>
<comment type="PTM">
    <text evidence="1">N-glycosylated.</text>
</comment>
<comment type="PTM">
    <text evidence="1">May be proteolytically processed into subunits alpha-2-3 and delta-3 that are disulfide-linked. It is however unclear whether such cleavage really takes place in vivo and has a functional role (By similarity).</text>
</comment>
<comment type="miscellaneous">
    <text>In contrast to CACNA2D1 and CACNA2D2, it does not bind gabapentin, an antiepileptic drug.</text>
</comment>
<comment type="similarity">
    <text evidence="7">Belongs to the calcium channel subunit alpha-2/delta family.</text>
</comment>
<keyword id="KW-0025">Alternative splicing</keyword>
<keyword id="KW-0106">Calcium</keyword>
<keyword id="KW-0107">Calcium channel</keyword>
<keyword id="KW-0109">Calcium transport</keyword>
<keyword id="KW-1015">Disulfide bond</keyword>
<keyword id="KW-0325">Glycoprotein</keyword>
<keyword id="KW-0407">Ion channel</keyword>
<keyword id="KW-0406">Ion transport</keyword>
<keyword id="KW-0472">Membrane</keyword>
<keyword id="KW-0479">Metal-binding</keyword>
<keyword id="KW-0597">Phosphoprotein</keyword>
<keyword id="KW-1267">Proteomics identification</keyword>
<keyword id="KW-1185">Reference proteome</keyword>
<keyword id="KW-0732">Signal</keyword>
<keyword id="KW-0812">Transmembrane</keyword>
<keyword id="KW-1133">Transmembrane helix</keyword>
<keyword id="KW-0813">Transport</keyword>
<keyword id="KW-0851">Voltage-gated channel</keyword>
<protein>
    <recommendedName>
        <fullName>Voltage-dependent calcium channel subunit alpha-2/delta-3</fullName>
    </recommendedName>
    <alternativeName>
        <fullName>Voltage-gated calcium channel subunit alpha-2/delta-3</fullName>
    </alternativeName>
    <component>
        <recommendedName>
            <fullName>Voltage-dependent calcium channel subunit alpha-2-3</fullName>
        </recommendedName>
    </component>
    <component>
        <recommendedName>
            <fullName>Voltage-dependent calcium channel subunit delta-3</fullName>
        </recommendedName>
    </component>
</protein>
<reference key="1">
    <citation type="journal article" date="2001" name="Gene">
        <title>Cloning a calcium channel alpha2delta-3 subunit gene from a putative tumor suppressor gene region at chromosome 3p21.1 in conventional renal cell carcinoma.</title>
        <authorList>
            <person name="Hanke S."/>
            <person name="Bugert P."/>
            <person name="Chudek J."/>
            <person name="Kovacs G."/>
        </authorList>
    </citation>
    <scope>NUCLEOTIDE SEQUENCE [MRNA] (ISOFORMS 2 AND 3)</scope>
    <source>
        <tissue>Brain</tissue>
    </source>
</reference>
<reference key="2">
    <citation type="journal article" date="2002" name="Mol. Pharmacol.">
        <title>Molecular cloning and characterization of the human voltage-gated calcium channel alpha(2)delta-4 subunit.</title>
        <authorList>
            <person name="Qin N."/>
            <person name="Yagel S."/>
            <person name="Momplaisir M.-L."/>
            <person name="Codd E.E."/>
            <person name="D'Andrea M.R."/>
        </authorList>
    </citation>
    <scope>NUCLEOTIDE SEQUENCE [MRNA] (ISOFORM 1)</scope>
</reference>
<reference key="3">
    <citation type="journal article" date="2004" name="Genome Res.">
        <title>The status, quality, and expansion of the NIH full-length cDNA project: the Mammalian Gene Collection (MGC).</title>
        <authorList>
            <consortium name="The MGC Project Team"/>
        </authorList>
    </citation>
    <scope>NUCLEOTIDE SEQUENCE [LARGE SCALE MRNA] (ISOFORM 1)</scope>
</reference>
<reference key="4">
    <citation type="journal article" date="2001" name="J. Membr. Biol.">
        <title>Tissue-specific expression and gabapentin-binding properties of calcium channel alpha2delta subunit subtypes.</title>
        <authorList>
            <person name="Gong H.C."/>
            <person name="Hang J."/>
            <person name="Kohler W."/>
            <person name="Li L."/>
            <person name="Su T.-Z."/>
        </authorList>
    </citation>
    <scope>TISSUE SPECIFICITY</scope>
</reference>
<sequence>MAGPGSPRRASRGASALLAAALLYAALGDVVRSEQQIPLSVVKLWASAFGGEIKSIAAKYSGSQLLQKKYKEYEKDVAIEEIDGLQLVKKLAKNMEEMFHKKSEAVRRLVEAAEEAHLKHEFDADLQYEYFNAVLINERDKDGNFLELGKEFILAPNDHFNNLPVNISLSDVQVPTNMYNKDPAIVNGVYWSESLNKVFVDNFDRDPSLIWQYFGSAKGFFRQYPGIKWEPDENGVIAFDCRNRKWYIQAATSPKDVVILVDVSGSMKGLRLTIAKQTVSSILDTLGDDDFFNIIAYNEELHYVEPCLNGTLVQADRTNKEHFREHLDKLFAKGIGMLDIALNEAFNILSDFNHTGQGSICSQAIMLITDGAVDTYDTIFAKYNWPDRKVRIFTYLIGREAAFADNLKWMACANKGFFTQISTLADVQENVMEYLHVLSRPKVIDQEHDVVWTEAYIDSTLPQAQKLTDDQGPVLMTTVAMPVFSKQNETRSKGILLGVVGTDVPVKELLKTIPKYKLGIHGYAFAITNNGYILTHPELRLLYEEGKKRRKPNYSSVDLSEVEWEDRDDVLRNAMVNRKTGKFSMEVKKTVDKGKRVLVMTNDYYYTDIKGTPFSLGVALSRGHGKYFFRGNVTIEEGLHDLEHPDVSLADEWSYCNTDLHPEHRHLSQLEAIKLYLKGKEPLLQCDKELIQEVLFDAVVSAPIEAYWTSLALNKSENSDKGVEVAFLGTRTGLSRINLFVGAEQLTNQDFLKAGDKENIFNADHFPLWYRRAAEQIPGSFVYSIPFSTGPVNKSNVVTASTSIQLLDERKSPVVAAVGIQMKLEFFQRKFWTASRQCASLDGKCSISCDDETVNCYLIDNNGFILVSEDYTQTGDFFGEIEGAVMNKLLTMGSFKRITLYDYQAMCRANKESSDGAHGLLDPYNAFLSAVKWIMTELVLFLVEFNLCSWWHSDMTAKAQKLKQTLEPCDTEYPAFVSERTIKETTGNIACEDCSKSFVIQQIPSSNLFMVVVDSSCLCESVAPITMAPIEIRYNESLKCERLKAQKIRRRPESCHGFHPEENARECGGAPSLQAQTVLLLLPLLLMLFSR</sequence>
<name>CA2D3_HUMAN</name>
<evidence type="ECO:0000250" key="1"/>
<evidence type="ECO:0000250" key="2">
    <source>
        <dbReference type="UniProtKB" id="Q8CFG5"/>
    </source>
</evidence>
<evidence type="ECO:0000255" key="3"/>
<evidence type="ECO:0000255" key="4">
    <source>
        <dbReference type="PROSITE-ProRule" id="PRU00219"/>
    </source>
</evidence>
<evidence type="ECO:0000269" key="5">
    <source>
    </source>
</evidence>
<evidence type="ECO:0000303" key="6">
    <source>
    </source>
</evidence>
<evidence type="ECO:0000305" key="7"/>
<dbReference type="EMBL" id="AJ272268">
    <property type="protein sequence ID" value="CAB75962.1"/>
    <property type="molecule type" value="mRNA"/>
</dbReference>
<dbReference type="EMBL" id="AJ272213">
    <property type="protein sequence ID" value="CAB75878.1"/>
    <property type="molecule type" value="mRNA"/>
</dbReference>
<dbReference type="EMBL" id="AF516696">
    <property type="protein sequence ID" value="AAN06673.1"/>
    <property type="molecule type" value="mRNA"/>
</dbReference>
<dbReference type="EMBL" id="BC137502">
    <property type="protein sequence ID" value="AAI37503.1"/>
    <property type="molecule type" value="mRNA"/>
</dbReference>
<dbReference type="EMBL" id="BC137505">
    <property type="protein sequence ID" value="AAI37506.1"/>
    <property type="molecule type" value="mRNA"/>
</dbReference>
<dbReference type="CCDS" id="CCDS54598.1">
    <molecule id="Q8IZS8-1"/>
</dbReference>
<dbReference type="RefSeq" id="NP_060868.2">
    <molecule id="Q8IZS8-1"/>
    <property type="nucleotide sequence ID" value="NM_018398.3"/>
</dbReference>
<dbReference type="SMR" id="Q8IZS8"/>
<dbReference type="BioGRID" id="120911">
    <property type="interactions" value="14"/>
</dbReference>
<dbReference type="ComplexPortal" id="CPX-8762">
    <property type="entry name" value="Cav1.1 voltage-gated calcium channel complex, CACNA2D3-CACNB1-CACNG1 variant"/>
</dbReference>
<dbReference type="ComplexPortal" id="CPX-8763">
    <property type="entry name" value="Cav1.1 voltage-gated calcium channel complex, CACNA2D3-CACNB2-CACNG1 variant"/>
</dbReference>
<dbReference type="ComplexPortal" id="CPX-8764">
    <property type="entry name" value="Cav1.1 voltage-gated calcium channel complex, CACNA2D3-CACNB3-CACNG1 variant"/>
</dbReference>
<dbReference type="ComplexPortal" id="CPX-8768">
    <property type="entry name" value="Cav1.1 voltage-gated calcium channel complex, CACNA2D3-CACNB4-CACNG1 variant"/>
</dbReference>
<dbReference type="ComplexPortal" id="CPX-8868">
    <property type="entry name" value="Cav1.2 voltage-gated calcium channel complex, CACNA2D3-CACNB1 variant"/>
</dbReference>
<dbReference type="ComplexPortal" id="CPX-8869">
    <property type="entry name" value="Cav1.2 voltage-gated calcium channel complex, CACNA2D3-CACNB2 variant"/>
</dbReference>
<dbReference type="ComplexPortal" id="CPX-8870">
    <property type="entry name" value="Cav1.2 voltage-gated calcium channel complex, CACNA2D3-CACNB3 variant"/>
</dbReference>
<dbReference type="ComplexPortal" id="CPX-8871">
    <property type="entry name" value="Cav1.2 voltage-gated calcium channel complex, CACNA2D3-CACNB4 variant"/>
</dbReference>
<dbReference type="FunCoup" id="Q8IZS8">
    <property type="interactions" value="609"/>
</dbReference>
<dbReference type="IntAct" id="Q8IZS8">
    <property type="interactions" value="9"/>
</dbReference>
<dbReference type="STRING" id="9606.ENSP00000419101"/>
<dbReference type="ChEMBL" id="CHEMBL2363032"/>
<dbReference type="DrugBank" id="DB00381">
    <property type="generic name" value="Amlodipine"/>
</dbReference>
<dbReference type="DrugBank" id="DB13746">
    <property type="generic name" value="Bioallethrin"/>
</dbReference>
<dbReference type="DrugBank" id="DB11148">
    <property type="generic name" value="Butamben"/>
</dbReference>
<dbReference type="DrugBank" id="DB09235">
    <property type="generic name" value="Efonidipine"/>
</dbReference>
<dbReference type="DrugBank" id="DB00228">
    <property type="generic name" value="Enflurane"/>
</dbReference>
<dbReference type="DrugBank" id="DB00153">
    <property type="generic name" value="Ergocalciferol"/>
</dbReference>
<dbReference type="DrugBank" id="DB00622">
    <property type="generic name" value="Nicardipine"/>
</dbReference>
<dbReference type="DrugBank" id="DB06712">
    <property type="generic name" value="Nilvadipine"/>
</dbReference>
<dbReference type="DrugBank" id="DB00661">
    <property type="generic name" value="Verapamil"/>
</dbReference>
<dbReference type="TCDB" id="8.A.18.3.1">
    <property type="family name" value="the ca(2+) channel auxiliary subunit Alpha2Delta types 1-4 (cca-Alpha2Delta) family"/>
</dbReference>
<dbReference type="GlyCosmos" id="Q8IZS8">
    <property type="glycosylation" value="5 sites, No reported glycans"/>
</dbReference>
<dbReference type="GlyGen" id="Q8IZS8">
    <property type="glycosylation" value="5 sites"/>
</dbReference>
<dbReference type="iPTMnet" id="Q8IZS8"/>
<dbReference type="PhosphoSitePlus" id="Q8IZS8"/>
<dbReference type="BioMuta" id="CACNA2D3"/>
<dbReference type="DMDM" id="74723683"/>
<dbReference type="MassIVE" id="Q8IZS8"/>
<dbReference type="PaxDb" id="9606-ENSP00000419101"/>
<dbReference type="PeptideAtlas" id="Q8IZS8"/>
<dbReference type="ProteomicsDB" id="71421">
    <molecule id="Q8IZS8-1"/>
</dbReference>
<dbReference type="ProteomicsDB" id="71422">
    <molecule id="Q8IZS8-2"/>
</dbReference>
<dbReference type="ProteomicsDB" id="71423">
    <molecule id="Q8IZS8-3"/>
</dbReference>
<dbReference type="Antibodypedia" id="31444">
    <property type="antibodies" value="124 antibodies from 23 providers"/>
</dbReference>
<dbReference type="DNASU" id="55799"/>
<dbReference type="Ensembl" id="ENST00000471363.5">
    <molecule id="Q8IZS8-3"/>
    <property type="protein sequence ID" value="ENSP00000418228.1"/>
    <property type="gene ID" value="ENSG00000157445.16"/>
</dbReference>
<dbReference type="Ensembl" id="ENST00000474759.6">
    <molecule id="Q8IZS8-1"/>
    <property type="protein sequence ID" value="ENSP00000419101.1"/>
    <property type="gene ID" value="ENSG00000157445.16"/>
</dbReference>
<dbReference type="Ensembl" id="ENST00000490478.5">
    <molecule id="Q8IZS8-2"/>
    <property type="protein sequence ID" value="ENSP00000417279.1"/>
    <property type="gene ID" value="ENSG00000157445.16"/>
</dbReference>
<dbReference type="GeneID" id="55799"/>
<dbReference type="KEGG" id="hsa:55799"/>
<dbReference type="MANE-Select" id="ENST00000474759.6">
    <property type="protein sequence ID" value="ENSP00000419101.1"/>
    <property type="RefSeq nucleotide sequence ID" value="NM_018398.3"/>
    <property type="RefSeq protein sequence ID" value="NP_060868.2"/>
</dbReference>
<dbReference type="UCSC" id="uc003dhf.3">
    <molecule id="Q8IZS8-1"/>
    <property type="organism name" value="human"/>
</dbReference>
<dbReference type="AGR" id="HGNC:15460"/>
<dbReference type="CTD" id="55799"/>
<dbReference type="DisGeNET" id="55799"/>
<dbReference type="GeneCards" id="CACNA2D3"/>
<dbReference type="HGNC" id="HGNC:15460">
    <property type="gene designation" value="CACNA2D3"/>
</dbReference>
<dbReference type="HPA" id="ENSG00000157445">
    <property type="expression patterns" value="Tissue enhanced (brain, skeletal muscle, tongue)"/>
</dbReference>
<dbReference type="MalaCards" id="CACNA2D3"/>
<dbReference type="MIM" id="606399">
    <property type="type" value="gene"/>
</dbReference>
<dbReference type="neXtProt" id="NX_Q8IZS8"/>
<dbReference type="OpenTargets" id="ENSG00000157445"/>
<dbReference type="PharmGKB" id="PA26013"/>
<dbReference type="VEuPathDB" id="HostDB:ENSG00000157445"/>
<dbReference type="eggNOG" id="KOG2353">
    <property type="taxonomic scope" value="Eukaryota"/>
</dbReference>
<dbReference type="GeneTree" id="ENSGT00940000155766"/>
<dbReference type="HOGENOM" id="CLU_004660_1_1_1"/>
<dbReference type="InParanoid" id="Q8IZS8"/>
<dbReference type="OMA" id="KEPLLQX"/>
<dbReference type="OrthoDB" id="10054666at2759"/>
<dbReference type="PAN-GO" id="Q8IZS8">
    <property type="GO annotations" value="2 GO annotations based on evolutionary models"/>
</dbReference>
<dbReference type="PhylomeDB" id="Q8IZS8"/>
<dbReference type="TreeFam" id="TF315824"/>
<dbReference type="PathwayCommons" id="Q8IZS8"/>
<dbReference type="Reactome" id="R-HSA-112308">
    <property type="pathway name" value="Presynaptic depolarization and calcium channel opening"/>
</dbReference>
<dbReference type="SignaLink" id="Q8IZS8"/>
<dbReference type="SIGNOR" id="Q8IZS8"/>
<dbReference type="BioGRID-ORCS" id="55799">
    <property type="hits" value="12 hits in 1141 CRISPR screens"/>
</dbReference>
<dbReference type="ChiTaRS" id="CACNA2D3">
    <property type="organism name" value="human"/>
</dbReference>
<dbReference type="GenomeRNAi" id="55799"/>
<dbReference type="Pharos" id="Q8IZS8">
    <property type="development level" value="Tbio"/>
</dbReference>
<dbReference type="PRO" id="PR:Q8IZS8"/>
<dbReference type="Proteomes" id="UP000005640">
    <property type="component" value="Chromosome 3"/>
</dbReference>
<dbReference type="RNAct" id="Q8IZS8">
    <property type="molecule type" value="protein"/>
</dbReference>
<dbReference type="Bgee" id="ENSG00000157445">
    <property type="expression patterns" value="Expressed in middle temporal gyrus and 137 other cell types or tissues"/>
</dbReference>
<dbReference type="ExpressionAtlas" id="Q8IZS8">
    <property type="expression patterns" value="baseline and differential"/>
</dbReference>
<dbReference type="GO" id="GO:0098982">
    <property type="term" value="C:GABA-ergic synapse"/>
    <property type="evidence" value="ECO:0007669"/>
    <property type="project" value="Ensembl"/>
</dbReference>
<dbReference type="GO" id="GO:0048787">
    <property type="term" value="C:presynaptic active zone membrane"/>
    <property type="evidence" value="ECO:0007669"/>
    <property type="project" value="Ensembl"/>
</dbReference>
<dbReference type="GO" id="GO:0005891">
    <property type="term" value="C:voltage-gated calcium channel complex"/>
    <property type="evidence" value="ECO:0000318"/>
    <property type="project" value="GO_Central"/>
</dbReference>
<dbReference type="GO" id="GO:0046872">
    <property type="term" value="F:metal ion binding"/>
    <property type="evidence" value="ECO:0007669"/>
    <property type="project" value="UniProtKB-KW"/>
</dbReference>
<dbReference type="GO" id="GO:0005245">
    <property type="term" value="F:voltage-gated calcium channel activity"/>
    <property type="evidence" value="ECO:0000318"/>
    <property type="project" value="GO_Central"/>
</dbReference>
<dbReference type="GO" id="GO:1990314">
    <property type="term" value="P:cellular response to insulin-like growth factor stimulus"/>
    <property type="evidence" value="ECO:0007669"/>
    <property type="project" value="Ensembl"/>
</dbReference>
<dbReference type="GO" id="GO:0099174">
    <property type="term" value="P:regulation of presynapse organization"/>
    <property type="evidence" value="ECO:0007669"/>
    <property type="project" value="Ensembl"/>
</dbReference>
<dbReference type="CDD" id="cd12912">
    <property type="entry name" value="PDC2_MCP_like"/>
    <property type="match status" value="1"/>
</dbReference>
<dbReference type="CDD" id="cd01463">
    <property type="entry name" value="vWA_VGCC_like"/>
    <property type="match status" value="1"/>
</dbReference>
<dbReference type="FunFam" id="3.30.450.20:FF:000012">
    <property type="entry name" value="Calcium channel, voltage-dependent, alpha2/delta subunit 3"/>
    <property type="match status" value="1"/>
</dbReference>
<dbReference type="FunFam" id="3.40.50.410:FF:000007">
    <property type="entry name" value="Calcium voltage-gated channel auxiliary subunit alpha2delta 3"/>
    <property type="match status" value="1"/>
</dbReference>
<dbReference type="Gene3D" id="3.30.450.20">
    <property type="entry name" value="PAS domain"/>
    <property type="match status" value="1"/>
</dbReference>
<dbReference type="Gene3D" id="3.40.50.410">
    <property type="entry name" value="von Willebrand factor, type A domain"/>
    <property type="match status" value="1"/>
</dbReference>
<dbReference type="InterPro" id="IPR051173">
    <property type="entry name" value="Ca_channel_alpha-2/delta"/>
</dbReference>
<dbReference type="InterPro" id="IPR013680">
    <property type="entry name" value="VDCC_a2/dsu"/>
</dbReference>
<dbReference type="InterPro" id="IPR013608">
    <property type="entry name" value="VWA_N"/>
</dbReference>
<dbReference type="InterPro" id="IPR002035">
    <property type="entry name" value="VWF_A"/>
</dbReference>
<dbReference type="InterPro" id="IPR036465">
    <property type="entry name" value="vWFA_dom_sf"/>
</dbReference>
<dbReference type="PANTHER" id="PTHR10166">
    <property type="entry name" value="VOLTAGE-DEPENDENT CALCIUM CHANNEL SUBUNIT ALPHA-2/DELTA-RELATED"/>
    <property type="match status" value="1"/>
</dbReference>
<dbReference type="PANTHER" id="PTHR10166:SF25">
    <property type="entry name" value="VOLTAGE-DEPENDENT CALCIUM CHANNEL SUBUNIT ALPHA-2_DELTA-3"/>
    <property type="match status" value="1"/>
</dbReference>
<dbReference type="Pfam" id="PF08473">
    <property type="entry name" value="VGCC_alpha2"/>
    <property type="match status" value="1"/>
</dbReference>
<dbReference type="Pfam" id="PF13768">
    <property type="entry name" value="VWA_3"/>
    <property type="match status" value="1"/>
</dbReference>
<dbReference type="Pfam" id="PF08399">
    <property type="entry name" value="VWA_N"/>
    <property type="match status" value="1"/>
</dbReference>
<dbReference type="SMART" id="SM00327">
    <property type="entry name" value="VWA"/>
    <property type="match status" value="1"/>
</dbReference>
<dbReference type="SUPFAM" id="SSF53300">
    <property type="entry name" value="vWA-like"/>
    <property type="match status" value="1"/>
</dbReference>
<dbReference type="PROSITE" id="PS50234">
    <property type="entry name" value="VWFA"/>
    <property type="match status" value="1"/>
</dbReference>
<gene>
    <name type="primary">CACNA2D3</name>
</gene>